<name>GT330_AFV2P</name>
<evidence type="ECO:0000305" key="1"/>
<sequence length="330" mass="37685">MIISKQCSNCSFDVVATQFVQWLQSYRQQQQQSGNHHVVDIILQKIGCGGDIEFIDINLWWSQCRTIDEGDAPHSVVRGDSPYAYITNVSDNEISDHLLVTTSQYNASMFRKLFRHIEVVPHAYDPLEVSVVDKVKEKKFDVITIGYDTADDHKGLTVARKVALDLSLRYVEVSNQCDNVGVNASTSQTQIQLADNMICIPFMTLTREDVYRLIAQSRFYLALSHTEGFGLPVLESMVAGTVPIYVDGHAFHEYAKGIPIPAYSDKRVDWYNYEYEDVVEVVKSAMSTSQSEYNELSMRVKEESRHYFHPDVVYRKLINIVNKNVKSNLF</sequence>
<feature type="chain" id="PRO_0000384482" description="Putative glycosyltransferase ORF330">
    <location>
        <begin position="1"/>
        <end position="330"/>
    </location>
</feature>
<gene>
    <name type="ORF">ORF330</name>
</gene>
<dbReference type="EC" id="2.4.-.-"/>
<dbReference type="EMBL" id="AJ854042">
    <property type="protein sequence ID" value="CAH69420.1"/>
    <property type="molecule type" value="Genomic_DNA"/>
</dbReference>
<dbReference type="RefSeq" id="YP_001496958.1">
    <property type="nucleotide sequence ID" value="NC_009884.1"/>
</dbReference>
<dbReference type="SMR" id="Q573D6"/>
<dbReference type="CAZy" id="GT4">
    <property type="family name" value="Glycosyltransferase Family 4"/>
</dbReference>
<dbReference type="KEGG" id="vg:5656100"/>
<dbReference type="Proteomes" id="UP000006364">
    <property type="component" value="Genome"/>
</dbReference>
<dbReference type="GO" id="GO:0016757">
    <property type="term" value="F:glycosyltransferase activity"/>
    <property type="evidence" value="ECO:0007669"/>
    <property type="project" value="UniProtKB-KW"/>
</dbReference>
<dbReference type="Gene3D" id="3.40.50.2000">
    <property type="entry name" value="Glycogen Phosphorylase B"/>
    <property type="match status" value="1"/>
</dbReference>
<dbReference type="InterPro" id="IPR001296">
    <property type="entry name" value="Glyco_trans_1"/>
</dbReference>
<dbReference type="Pfam" id="PF00534">
    <property type="entry name" value="Glycos_transf_1"/>
    <property type="match status" value="1"/>
</dbReference>
<dbReference type="SUPFAM" id="SSF53756">
    <property type="entry name" value="UDP-Glycosyltransferase/glycogen phosphorylase"/>
    <property type="match status" value="1"/>
</dbReference>
<proteinExistence type="inferred from homology"/>
<reference key="1">
    <citation type="journal article" date="2005" name="J. Bacteriol.">
        <title>Structure and genome organization of AFV2, a novel archaeal lipothrixvirus with unusual terminal and core structures.</title>
        <authorList>
            <person name="Haring M."/>
            <person name="Vestergaard G."/>
            <person name="Brugger K."/>
            <person name="Rachel R."/>
            <person name="Garrett R.A."/>
            <person name="Prangishvili D."/>
        </authorList>
    </citation>
    <scope>NUCLEOTIDE SEQUENCE [GENOMIC DNA]</scope>
</reference>
<accession>Q573D6</accession>
<organism>
    <name type="scientific">Acidianus filamentous virus 2 (isolate Italy/Pozzuoli)</name>
    <name type="common">AFV-2</name>
    <dbReference type="NCBI Taxonomy" id="654910"/>
    <lineage>
        <taxon>Viruses</taxon>
        <taxon>Adnaviria</taxon>
        <taxon>Zilligvirae</taxon>
        <taxon>Taleaviricota</taxon>
        <taxon>Tokiviricetes</taxon>
        <taxon>Ligamenvirales</taxon>
        <taxon>Lipothrixviridae</taxon>
        <taxon>Deltalipothrixvirus</taxon>
        <taxon>Acidianus filamentous virus 2</taxon>
    </lineage>
</organism>
<organismHost>
    <name type="scientific">Acidianus sp. F28</name>
    <dbReference type="NCBI Taxonomy" id="315458"/>
</organismHost>
<protein>
    <recommendedName>
        <fullName>Putative glycosyltransferase ORF330</fullName>
        <ecNumber>2.4.-.-</ecNumber>
    </recommendedName>
</protein>
<keyword id="KW-0328">Glycosyltransferase</keyword>
<keyword id="KW-1185">Reference proteome</keyword>
<keyword id="KW-0808">Transferase</keyword>
<comment type="similarity">
    <text evidence="1">Belongs to the glycosyltransferase group 1 family. Glycosyltransferase 4 subfamily.</text>
</comment>